<gene>
    <name evidence="1" type="primary">lptD</name>
    <name type="synonym">imp</name>
    <name type="synonym">ostA</name>
    <name type="ordered locus">BB4102</name>
</gene>
<accession>Q7WG18</accession>
<evidence type="ECO:0000255" key="1">
    <source>
        <dbReference type="HAMAP-Rule" id="MF_01411"/>
    </source>
</evidence>
<reference key="1">
    <citation type="journal article" date="2003" name="Nat. Genet.">
        <title>Comparative analysis of the genome sequences of Bordetella pertussis, Bordetella parapertussis and Bordetella bronchiseptica.</title>
        <authorList>
            <person name="Parkhill J."/>
            <person name="Sebaihia M."/>
            <person name="Preston A."/>
            <person name="Murphy L.D."/>
            <person name="Thomson N.R."/>
            <person name="Harris D.E."/>
            <person name="Holden M.T.G."/>
            <person name="Churcher C.M."/>
            <person name="Bentley S.D."/>
            <person name="Mungall K.L."/>
            <person name="Cerdeno-Tarraga A.-M."/>
            <person name="Temple L."/>
            <person name="James K.D."/>
            <person name="Harris B."/>
            <person name="Quail M.A."/>
            <person name="Achtman M."/>
            <person name="Atkin R."/>
            <person name="Baker S."/>
            <person name="Basham D."/>
            <person name="Bason N."/>
            <person name="Cherevach I."/>
            <person name="Chillingworth T."/>
            <person name="Collins M."/>
            <person name="Cronin A."/>
            <person name="Davis P."/>
            <person name="Doggett J."/>
            <person name="Feltwell T."/>
            <person name="Goble A."/>
            <person name="Hamlin N."/>
            <person name="Hauser H."/>
            <person name="Holroyd S."/>
            <person name="Jagels K."/>
            <person name="Leather S."/>
            <person name="Moule S."/>
            <person name="Norberczak H."/>
            <person name="O'Neil S."/>
            <person name="Ormond D."/>
            <person name="Price C."/>
            <person name="Rabbinowitsch E."/>
            <person name="Rutter S."/>
            <person name="Sanders M."/>
            <person name="Saunders D."/>
            <person name="Seeger K."/>
            <person name="Sharp S."/>
            <person name="Simmonds M."/>
            <person name="Skelton J."/>
            <person name="Squares R."/>
            <person name="Squares S."/>
            <person name="Stevens K."/>
            <person name="Unwin L."/>
            <person name="Whitehead S."/>
            <person name="Barrell B.G."/>
            <person name="Maskell D.J."/>
        </authorList>
    </citation>
    <scope>NUCLEOTIDE SEQUENCE [LARGE SCALE GENOMIC DNA]</scope>
    <source>
        <strain>ATCC BAA-588 / NCTC 13252 / RB50</strain>
    </source>
</reference>
<sequence length="790" mass="88628">MRMLRWLILSAFSVAGAVQAQGNQDSAAASAPSASIGAPVLRTSPGLRVHRLPDEKIPAFMEADQISGDPDSEVTLTGNAQVRRVDGIIKGDRINYRRDTGDVDVQGSARMLRDGTLITGPSARLNVDTYSGEIQEPNFWIGASGGTAQARHADIFSKSQMRLSQVTYSGCPCPKPSWYIKADTVDLDFDENEGVARNGVLYFKDVPILASPYLTFPVKKERKSGFLMPTYGTTSNSGFDISLPYYFNLAPNYDLTLVPRYLSKRGAQLGGEFRYLGSGYRGVAIGTYLPDDNETGRDRWMYRTYHRQLLGNGFYTDWDIAGASDDNYFRDISELGLNTASTTYLPRRGRVGWSSTYWQTYAQVYKYQTLQDPDAPLAPPYDKVPELWLKGARYDWGGFDAEWVSTAVRFQRPLLNGRRLGPDGDRLQTYPTVSYPIVRPGWFLVPKVGVHYTQYRTDWYNRDWNRIGLSNYKRTESRTVPIMSLDAGMIFERDASLFGKAATQTLEPRLYYLRVPYRDQSALPVYDTTLADFSFDQAFQENIYTGGWDRIANANQLTAALTTRWLDANTGFERLSLSAAQRIYFQDQEVTLPAEQPRKNVRSDFLVGATAALTDTLTTDVAAQYNPYDNKWSRGMVSARWSPQRLTTVAVAYRYQRDPLPGISYQPQGQNQVSLAVQWPIHRRWYGVGRVDYSLRSEPATAAAAEQSPRVTQAIAGLEYKGDCCWVGRVVYQRYAVSAADTNTALFFQLELTGLGALGTDPISLLNRSIPGYQSVVPPTPTGTTFERYE</sequence>
<dbReference type="EMBL" id="BX640449">
    <property type="protein sequence ID" value="CAE34465.1"/>
    <property type="molecule type" value="Genomic_DNA"/>
</dbReference>
<dbReference type="SMR" id="Q7WG18"/>
<dbReference type="KEGG" id="bbr:BB4102"/>
<dbReference type="eggNOG" id="COG1452">
    <property type="taxonomic scope" value="Bacteria"/>
</dbReference>
<dbReference type="HOGENOM" id="CLU_009039_0_0_4"/>
<dbReference type="Proteomes" id="UP000001027">
    <property type="component" value="Chromosome"/>
</dbReference>
<dbReference type="GO" id="GO:0009279">
    <property type="term" value="C:cell outer membrane"/>
    <property type="evidence" value="ECO:0007669"/>
    <property type="project" value="UniProtKB-SubCell"/>
</dbReference>
<dbReference type="GO" id="GO:1990351">
    <property type="term" value="C:transporter complex"/>
    <property type="evidence" value="ECO:0007669"/>
    <property type="project" value="TreeGrafter"/>
</dbReference>
<dbReference type="GO" id="GO:0043165">
    <property type="term" value="P:Gram-negative-bacterium-type cell outer membrane assembly"/>
    <property type="evidence" value="ECO:0007669"/>
    <property type="project" value="UniProtKB-UniRule"/>
</dbReference>
<dbReference type="GO" id="GO:0015920">
    <property type="term" value="P:lipopolysaccharide transport"/>
    <property type="evidence" value="ECO:0007669"/>
    <property type="project" value="InterPro"/>
</dbReference>
<dbReference type="Gene3D" id="2.60.450.10">
    <property type="entry name" value="Lipopolysaccharide (LPS) transport protein A like domain"/>
    <property type="match status" value="1"/>
</dbReference>
<dbReference type="HAMAP" id="MF_01411">
    <property type="entry name" value="LPS_assembly_LptD"/>
    <property type="match status" value="1"/>
</dbReference>
<dbReference type="InterPro" id="IPR020889">
    <property type="entry name" value="LipoPS_assembly_LptD"/>
</dbReference>
<dbReference type="InterPro" id="IPR050218">
    <property type="entry name" value="LptD"/>
</dbReference>
<dbReference type="InterPro" id="IPR045659">
    <property type="entry name" value="LptD_2"/>
</dbReference>
<dbReference type="InterPro" id="IPR007543">
    <property type="entry name" value="LptD_C"/>
</dbReference>
<dbReference type="PANTHER" id="PTHR30189">
    <property type="entry name" value="LPS-ASSEMBLY PROTEIN"/>
    <property type="match status" value="1"/>
</dbReference>
<dbReference type="PANTHER" id="PTHR30189:SF1">
    <property type="entry name" value="LPS-ASSEMBLY PROTEIN LPTD"/>
    <property type="match status" value="1"/>
</dbReference>
<dbReference type="Pfam" id="PF04453">
    <property type="entry name" value="LptD"/>
    <property type="match status" value="1"/>
</dbReference>
<dbReference type="Pfam" id="PF19838">
    <property type="entry name" value="LptD_2"/>
    <property type="match status" value="1"/>
</dbReference>
<proteinExistence type="inferred from homology"/>
<comment type="function">
    <text evidence="1">Together with LptE, is involved in the assembly of lipopolysaccharide (LPS) at the surface of the outer membrane.</text>
</comment>
<comment type="subunit">
    <text evidence="1">Component of the lipopolysaccharide transport and assembly complex. Interacts with LptE and LptA.</text>
</comment>
<comment type="subcellular location">
    <subcellularLocation>
        <location evidence="1">Cell outer membrane</location>
    </subcellularLocation>
</comment>
<comment type="similarity">
    <text evidence="1">Belongs to the LptD family.</text>
</comment>
<organism>
    <name type="scientific">Bordetella bronchiseptica (strain ATCC BAA-588 / NCTC 13252 / RB50)</name>
    <name type="common">Alcaligenes bronchisepticus</name>
    <dbReference type="NCBI Taxonomy" id="257310"/>
    <lineage>
        <taxon>Bacteria</taxon>
        <taxon>Pseudomonadati</taxon>
        <taxon>Pseudomonadota</taxon>
        <taxon>Betaproteobacteria</taxon>
        <taxon>Burkholderiales</taxon>
        <taxon>Alcaligenaceae</taxon>
        <taxon>Bordetella</taxon>
    </lineage>
</organism>
<name>LPTD_BORBR</name>
<keyword id="KW-0998">Cell outer membrane</keyword>
<keyword id="KW-0472">Membrane</keyword>
<keyword id="KW-0732">Signal</keyword>
<protein>
    <recommendedName>
        <fullName evidence="1">LPS-assembly protein LptD</fullName>
    </recommendedName>
</protein>
<feature type="signal peptide" evidence="1">
    <location>
        <begin position="1"/>
        <end position="20"/>
    </location>
</feature>
<feature type="chain" id="PRO_0000281589" description="LPS-assembly protein LptD">
    <location>
        <begin position="21"/>
        <end position="790"/>
    </location>
</feature>